<comment type="function">
    <text evidence="3 7 10">RNA-binding protein that is required for primordial germ cell (PGC) differentiation and indirectly necessary for the migration of PGCs through the endoderm. May promote meiotic cell division during spermatogenesis. Shows a preference for G- and U-rich RNAs and probably binds the 3'-UTR of target mRNAs. Stimulates the initiation of translation of mRNAs through the recruitment of poly(A)-binding proteins (PABPs).</text>
</comment>
<comment type="subunit">
    <text evidence="7 9">Interacts with the C-terminus of pabp1 and with epabp. Prior to oocyte maturation, found in a complex with epabp and pum2 proteins and spdy1 mRNA; pum2 dissociates from the complex during maturation.</text>
</comment>
<comment type="subcellular location">
    <subcellularLocation>
        <location evidence="4 5 10">Cytoplasm</location>
    </subcellularLocation>
</comment>
<comment type="tissue specificity">
    <text evidence="3 4 5 6 8 10">Germ-line specific. Oocyte mRNA expression is first restricted to the granulo-fibrillar material (GFM) of the mitochondrial cloud and then to the oocyte germ plasm at the vegetal cortex. Remains an mRNA component of the germ plasm until the neurula stage. In 2-8 cell embryos, expressed in the germ plasm matrix between germinal granules and mitochondria. Expressed in primordial germ cells (PGCs) later in embryogenesis. In addition to the ovaries of adult females, expressed in the testis of adult and juvenile males in spermatogonia and spermatocytes. The protein is restricted to the embryonic germ plasm and primordial germ cells.</text>
</comment>
<comment type="developmental stage">
    <text evidence="3 4">Expressed both maternally and zygotically. Transcripts are first detected in the gonads of postmetamorphic froglets, being present in the embryo at the time when germ plasm moves to its perinuclear location (stage 10) and then decreasing in stages immediately following. Protein is expressed in embryos from the blastula to the early tailbud stage.</text>
</comment>
<comment type="similarity">
    <text evidence="2">Belongs to the RRM DAZ family.</text>
</comment>
<evidence type="ECO:0000255" key="1">
    <source>
        <dbReference type="PROSITE-ProRule" id="PRU00176"/>
    </source>
</evidence>
<evidence type="ECO:0000255" key="2">
    <source>
        <dbReference type="PROSITE-ProRule" id="PRU01238"/>
    </source>
</evidence>
<evidence type="ECO:0000269" key="3">
    <source>
    </source>
</evidence>
<evidence type="ECO:0000269" key="4">
    <source>
    </source>
</evidence>
<evidence type="ECO:0000269" key="5">
    <source>
    </source>
</evidence>
<evidence type="ECO:0000269" key="6">
    <source>
    </source>
</evidence>
<evidence type="ECO:0000269" key="7">
    <source>
    </source>
</evidence>
<evidence type="ECO:0000269" key="8">
    <source>
    </source>
</evidence>
<evidence type="ECO:0000269" key="9">
    <source>
    </source>
</evidence>
<evidence type="ECO:0000269" key="10">
    <source>
    </source>
</evidence>
<evidence type="ECO:0000305" key="11"/>
<evidence type="ECO:0000312" key="12">
    <source>
        <dbReference type="EMBL" id="AAC41242.1"/>
    </source>
</evidence>
<protein>
    <recommendedName>
        <fullName>Deleted in azoospermia-like-A</fullName>
        <shortName>DAZ-like protein A</shortName>
        <shortName>xDazl-A</shortName>
    </recommendedName>
</protein>
<gene>
    <name type="primary">dazl-a</name>
</gene>
<accession>O57437</accession>
<feature type="chain" id="PRO_0000248849" description="Deleted in azoospermia-like-A">
    <location>
        <begin position="1"/>
        <end position="286"/>
    </location>
</feature>
<feature type="domain" description="RRM" evidence="1">
    <location>
        <begin position="33"/>
        <end position="114"/>
    </location>
</feature>
<feature type="domain" description="DAZ" evidence="2">
    <location>
        <begin position="155"/>
        <end position="180"/>
    </location>
</feature>
<keyword id="KW-0963">Cytoplasm</keyword>
<keyword id="KW-0217">Developmental protein</keyword>
<keyword id="KW-0221">Differentiation</keyword>
<keyword id="KW-0896">Oogenesis</keyword>
<keyword id="KW-1185">Reference proteome</keyword>
<keyword id="KW-0694">RNA-binding</keyword>
<keyword id="KW-0744">Spermatogenesis</keyword>
<keyword id="KW-0810">Translation regulation</keyword>
<organism>
    <name type="scientific">Xenopus laevis</name>
    <name type="common">African clawed frog</name>
    <dbReference type="NCBI Taxonomy" id="8355"/>
    <lineage>
        <taxon>Eukaryota</taxon>
        <taxon>Metazoa</taxon>
        <taxon>Chordata</taxon>
        <taxon>Craniata</taxon>
        <taxon>Vertebrata</taxon>
        <taxon>Euteleostomi</taxon>
        <taxon>Amphibia</taxon>
        <taxon>Batrachia</taxon>
        <taxon>Anura</taxon>
        <taxon>Pipoidea</taxon>
        <taxon>Pipidae</taxon>
        <taxon>Xenopodinae</taxon>
        <taxon>Xenopus</taxon>
        <taxon>Xenopus</taxon>
    </lineage>
</organism>
<name>DAZLA_XENLA</name>
<reference evidence="11 12" key="1">
    <citation type="journal article" date="1998" name="Development">
        <title>A Xenopus DAZ-like gene encodes an RNA component of germ plasm and is a functional homologue of Drosophila boule.</title>
        <authorList>
            <person name="Houston D.W."/>
            <person name="Zhang J."/>
            <person name="Maines J.Z."/>
            <person name="Wasserman S.A."/>
            <person name="King M.L."/>
        </authorList>
    </citation>
    <scope>NUCLEOTIDE SEQUENCE [MRNA]</scope>
    <scope>FUNCTION</scope>
    <scope>SUBCELLULAR LOCATION</scope>
    <scope>TISSUE SPECIFICITY</scope>
    <source>
        <tissue evidence="10">Oocyte</tissue>
    </source>
</reference>
<reference evidence="11" key="2">
    <citation type="journal article" date="2000" name="Development">
        <title>A critical role for Xdazl, a germ plasm-localized RNA, in the differentiation of primordial germ cells in Xenopus.</title>
        <authorList>
            <person name="Houston D.W."/>
            <person name="King M.L."/>
        </authorList>
    </citation>
    <scope>FUNCTION</scope>
    <scope>TISSUE SPECIFICITY</scope>
    <scope>DEVELOPMENTAL STAGE</scope>
</reference>
<reference evidence="11" key="3">
    <citation type="journal article" date="2000" name="Mech. Dev.">
        <title>Expression of Xenopus Daz-like protein during gametogenesis and embryogenesis.</title>
        <authorList>
            <person name="Mita K."/>
            <person name="Yamashita M."/>
        </authorList>
    </citation>
    <scope>SUBCELLULAR LOCATION</scope>
    <scope>TISSUE SPECIFICITY</scope>
    <scope>DEVELOPMENTAL STAGE</scope>
</reference>
<reference evidence="11" key="4">
    <citation type="journal article" date="2002" name="Dev. Biol.">
        <title>Three-dimensional ultrastructural analysis of RNA distribution within germinal granules of Xenopus.</title>
        <authorList>
            <person name="Kloc M."/>
            <person name="Dougherty M.T."/>
            <person name="Bilinski S."/>
            <person name="Chan A.P."/>
            <person name="Brey E."/>
            <person name="King M.L."/>
            <person name="Patrick C.W. Jr."/>
            <person name="Etkin L.D."/>
        </authorList>
    </citation>
    <scope>SUBCELLULAR LOCATION</scope>
    <scope>TISSUE SPECIFICITY</scope>
</reference>
<reference evidence="11" key="5">
    <citation type="journal article" date="2004" name="Mol. Biol. Cell">
        <title>Localization of RNAs to the mitochondrial cloud in Xenopus oocytes through entrapment and association with endoplasmic reticulum.</title>
        <authorList>
            <person name="Chang P."/>
            <person name="Torres J."/>
            <person name="Lewis R.A."/>
            <person name="Mowry K.L."/>
            <person name="Houliston E."/>
            <person name="King M.L."/>
        </authorList>
    </citation>
    <scope>TISSUE SPECIFICITY</scope>
</reference>
<reference evidence="11" key="6">
    <citation type="journal article" date="2005" name="Dev. Growth Differ.">
        <title>Identification of asymmetrically localized transcripts along the animal-vegetal axis of the Xenopus egg.</title>
        <authorList>
            <person name="Kataoka K."/>
            <person name="Tazaki A."/>
            <person name="Kitayama A."/>
            <person name="Ueno N."/>
            <person name="Watanabe K."/>
            <person name="Mochii M."/>
        </authorList>
    </citation>
    <scope>TISSUE SPECIFICITY</scope>
</reference>
<reference evidence="11" key="7">
    <citation type="journal article" date="2005" name="EMBO J.">
        <title>The DAZL family proteins are PABP-binding proteins that regulate translation in germ cells.</title>
        <authorList>
            <person name="Collier B."/>
            <person name="Gorgoni B."/>
            <person name="Loveridge C."/>
            <person name="Cooke H.J."/>
            <person name="Gray N.K."/>
        </authorList>
    </citation>
    <scope>FUNCTION</scope>
    <scope>INTERACTION WITH PABP1 AND EPABP</scope>
</reference>
<reference evidence="11" key="8">
    <citation type="journal article" date="2006" name="Genes Dev.">
        <title>Regulated Pumilio-2 binding controls RINGO/Spy mRNA translation and CPEB activation.</title>
        <authorList>
            <person name="Padmanabhan K."/>
            <person name="Richter J.D."/>
        </authorList>
    </citation>
    <scope>IDENTIFICATION IN A COMPLEX WITH SPDY1 MRNA; PUM2 AND EPABP</scope>
</reference>
<proteinExistence type="evidence at protein level"/>
<dbReference type="EMBL" id="AF017778">
    <property type="protein sequence ID" value="AAC41242.1"/>
    <property type="molecule type" value="mRNA"/>
</dbReference>
<dbReference type="RefSeq" id="NP_001081772.1">
    <property type="nucleotide sequence ID" value="NM_001088303.1"/>
</dbReference>
<dbReference type="SMR" id="O57437"/>
<dbReference type="GeneID" id="398041"/>
<dbReference type="KEGG" id="xla:398041"/>
<dbReference type="AGR" id="Xenbase:XB-GENE-6078612"/>
<dbReference type="CTD" id="398041"/>
<dbReference type="Xenbase" id="XB-GENE-6078612">
    <property type="gene designation" value="dazl.L"/>
</dbReference>
<dbReference type="OrthoDB" id="762982at2759"/>
<dbReference type="Proteomes" id="UP000186698">
    <property type="component" value="Chromosome 6L"/>
</dbReference>
<dbReference type="Bgee" id="398041">
    <property type="expression patterns" value="Expressed in testis and 9 other cell types or tissues"/>
</dbReference>
<dbReference type="GO" id="GO:0005737">
    <property type="term" value="C:cytoplasm"/>
    <property type="evidence" value="ECO:0000314"/>
    <property type="project" value="UniProtKB"/>
</dbReference>
<dbReference type="GO" id="GO:0032019">
    <property type="term" value="C:mitochondrial cloud"/>
    <property type="evidence" value="ECO:0000314"/>
    <property type="project" value="UniProtKB"/>
</dbReference>
<dbReference type="GO" id="GO:0045495">
    <property type="term" value="C:pole plasm"/>
    <property type="evidence" value="ECO:0000314"/>
    <property type="project" value="UniProtKB"/>
</dbReference>
<dbReference type="GO" id="GO:0003730">
    <property type="term" value="F:mRNA 3'-UTR binding"/>
    <property type="evidence" value="ECO:0000318"/>
    <property type="project" value="GO_Central"/>
</dbReference>
<dbReference type="GO" id="GO:0003723">
    <property type="term" value="F:RNA binding"/>
    <property type="evidence" value="ECO:0000314"/>
    <property type="project" value="UniProtKB"/>
</dbReference>
<dbReference type="GO" id="GO:0008494">
    <property type="term" value="F:translation activator activity"/>
    <property type="evidence" value="ECO:0000314"/>
    <property type="project" value="UniProtKB"/>
</dbReference>
<dbReference type="GO" id="GO:0070935">
    <property type="term" value="P:3'-UTR-mediated mRNA stabilization"/>
    <property type="evidence" value="ECO:0000318"/>
    <property type="project" value="GO_Central"/>
</dbReference>
<dbReference type="GO" id="GO:0007281">
    <property type="term" value="P:germ cell development"/>
    <property type="evidence" value="ECO:0000315"/>
    <property type="project" value="UniProtKB"/>
</dbReference>
<dbReference type="GO" id="GO:0008354">
    <property type="term" value="P:germ cell migration"/>
    <property type="evidence" value="ECO:0000315"/>
    <property type="project" value="UniProtKB"/>
</dbReference>
<dbReference type="GO" id="GO:0048477">
    <property type="term" value="P:oogenesis"/>
    <property type="evidence" value="ECO:0007669"/>
    <property type="project" value="UniProtKB-KW"/>
</dbReference>
<dbReference type="GO" id="GO:0045948">
    <property type="term" value="P:positive regulation of translational initiation"/>
    <property type="evidence" value="ECO:0000314"/>
    <property type="project" value="UniProtKB"/>
</dbReference>
<dbReference type="GO" id="GO:0007283">
    <property type="term" value="P:spermatogenesis"/>
    <property type="evidence" value="ECO:0007669"/>
    <property type="project" value="UniProtKB-KW"/>
</dbReference>
<dbReference type="CDD" id="cd12672">
    <property type="entry name" value="RRM_DAZL"/>
    <property type="match status" value="1"/>
</dbReference>
<dbReference type="FunFam" id="3.30.70.330:FF:000180">
    <property type="entry name" value="Deleted in azoospermia-like"/>
    <property type="match status" value="1"/>
</dbReference>
<dbReference type="Gene3D" id="3.30.70.330">
    <property type="match status" value="1"/>
</dbReference>
<dbReference type="InterPro" id="IPR043628">
    <property type="entry name" value="DAZ_dom"/>
</dbReference>
<dbReference type="InterPro" id="IPR037551">
    <property type="entry name" value="DAZ_RRM_vert"/>
</dbReference>
<dbReference type="InterPro" id="IPR012677">
    <property type="entry name" value="Nucleotide-bd_a/b_plait_sf"/>
</dbReference>
<dbReference type="InterPro" id="IPR035979">
    <property type="entry name" value="RBD_domain_sf"/>
</dbReference>
<dbReference type="InterPro" id="IPR000504">
    <property type="entry name" value="RRM_dom"/>
</dbReference>
<dbReference type="PANTHER" id="PTHR11176">
    <property type="entry name" value="BOULE-RELATED"/>
    <property type="match status" value="1"/>
</dbReference>
<dbReference type="PANTHER" id="PTHR11176:SF4">
    <property type="entry name" value="DELETED IN AZOOSPERMIA-LIKE"/>
    <property type="match status" value="1"/>
</dbReference>
<dbReference type="Pfam" id="PF00076">
    <property type="entry name" value="RRM_1"/>
    <property type="match status" value="1"/>
</dbReference>
<dbReference type="SMART" id="SM00360">
    <property type="entry name" value="RRM"/>
    <property type="match status" value="1"/>
</dbReference>
<dbReference type="SUPFAM" id="SSF54928">
    <property type="entry name" value="RNA-binding domain, RBD"/>
    <property type="match status" value="1"/>
</dbReference>
<dbReference type="PROSITE" id="PS51890">
    <property type="entry name" value="DAZ"/>
    <property type="match status" value="1"/>
</dbReference>
<dbReference type="PROSITE" id="PS50102">
    <property type="entry name" value="RRM"/>
    <property type="match status" value="1"/>
</dbReference>
<sequence>MSGKEESSNYAATAEEEAVNQGFVLPEGEIMPNTVFVGGIDITMDEIEIRDFFTRFGNVKEVKIITDRTGVSKGYGFISFSDEVDVQKIVKSQISFHGKKLKLGPAIRKICTYVQPRPVVLSHPTPFHHAWNNQNADSYIQHSPIVSPITQYVQACPYPSSPPMAIQQIPVGCQQPGYFQVSPQWPADQRSYMFPTPAFTFNYHCCDMDPNGGEPIPREYPIDQTVSASGANPQKRYVEMSTQTIVSCLFDPANKFHSFVSQEDYLKDNRVHHLRRRESVIKRVSK</sequence>